<sequence length="449" mass="47682">MDLRPELPTVSSASQVHPGAAAAAAAASIPVSMAGNLLRGPPLLLRAADKYPRTPKCARCRNHGVVSALKGHKRYCRWKDCMCAKCTLIAERQRVMAAQVALRRQQAQEENEARELQLLYGTAEGLALAAANGIIPPRPNYEVFGSVNSESNSESSIQKYELFPKTQLSGSTTTQKSVGKPASTESDSAPGMSSPDGRHGGGSGSENGDSESFINSPVSKPLKDGEETPGSVSSLGSDSGSETDKEEQEPSPSSAASRHMNAIDILTRVFPSHKRSVLELVLQGCGKDVVQAIEQILNNSGAQAPNKAGPEETWTAERMLQSAQQPPAGSATAATTTRPMLPGAMTLSNRSAFSPLQPNAPHFGADPGTYPLGTHLGLNPLRLAYSAHSRGLAFMTPYSTTGLMPTLGFRPPMDYAFSDLIRDRTMLHKEQGYASGLYGPLVNNTPDKQ</sequence>
<evidence type="ECO:0000255" key="1"/>
<evidence type="ECO:0000255" key="2">
    <source>
        <dbReference type="PROSITE-ProRule" id="PRU00070"/>
    </source>
</evidence>
<evidence type="ECO:0000256" key="3">
    <source>
        <dbReference type="SAM" id="MobiDB-lite"/>
    </source>
</evidence>
<evidence type="ECO:0000269" key="4">
    <source>
    </source>
</evidence>
<evidence type="ECO:0000305" key="5"/>
<feature type="chain" id="PRO_0000333779" description="Doublesex- and mab-3-related transcription factor A2">
    <location>
        <begin position="1"/>
        <end position="449"/>
    </location>
</feature>
<feature type="domain" description="DMA" evidence="1">
    <location>
        <begin position="260"/>
        <end position="295"/>
    </location>
</feature>
<feature type="DNA-binding region" description="DM" evidence="2">
    <location>
        <begin position="57"/>
        <end position="104"/>
    </location>
</feature>
<feature type="region of interest" description="Disordered" evidence="3">
    <location>
        <begin position="163"/>
        <end position="259"/>
    </location>
</feature>
<feature type="compositionally biased region" description="Polar residues" evidence="3">
    <location>
        <begin position="166"/>
        <end position="187"/>
    </location>
</feature>
<feature type="compositionally biased region" description="Low complexity" evidence="3">
    <location>
        <begin position="230"/>
        <end position="240"/>
    </location>
</feature>
<gene>
    <name type="primary">dmrta2</name>
    <name type="synonym">dmrt5</name>
</gene>
<name>DMTA2_XIPMA</name>
<keyword id="KW-0238">DNA-binding</keyword>
<keyword id="KW-0479">Metal-binding</keyword>
<keyword id="KW-0539">Nucleus</keyword>
<keyword id="KW-1185">Reference proteome</keyword>
<keyword id="KW-0862">Zinc</keyword>
<organism>
    <name type="scientific">Xiphophorus maculatus</name>
    <name type="common">Southern platyfish</name>
    <name type="synonym">Platypoecilus maculatus</name>
    <dbReference type="NCBI Taxonomy" id="8083"/>
    <lineage>
        <taxon>Eukaryota</taxon>
        <taxon>Metazoa</taxon>
        <taxon>Chordata</taxon>
        <taxon>Craniata</taxon>
        <taxon>Vertebrata</taxon>
        <taxon>Euteleostomi</taxon>
        <taxon>Actinopterygii</taxon>
        <taxon>Neopterygii</taxon>
        <taxon>Teleostei</taxon>
        <taxon>Neoteleostei</taxon>
        <taxon>Acanthomorphata</taxon>
        <taxon>Ovalentaria</taxon>
        <taxon>Atherinomorphae</taxon>
        <taxon>Cyprinodontiformes</taxon>
        <taxon>Poeciliidae</taxon>
        <taxon>Poeciliinae</taxon>
        <taxon>Xiphophorus</taxon>
    </lineage>
</organism>
<proteinExistence type="evidence at transcript level"/>
<protein>
    <recommendedName>
        <fullName>Doublesex- and mab-3-related transcription factor A2</fullName>
    </recommendedName>
    <alternativeName>
        <fullName>Doublesex- and mab-3-related transcription factor 5</fullName>
    </alternativeName>
</protein>
<accession>Q2I327</accession>
<reference key="1">
    <citation type="journal article" date="2006" name="Zebrafish">
        <title>Tissue-specific expression of dmrt genes in embryos and adults of the Platyfish Xiphophorus maculatus.</title>
        <authorList>
            <person name="Veith A.-M."/>
            <person name="Schafer M."/>
            <person name="Kluver N."/>
            <person name="Schmidt C."/>
            <person name="Schultheis C."/>
            <person name="Schartl M."/>
            <person name="Winkler C."/>
            <person name="Volff J.-N."/>
        </authorList>
    </citation>
    <scope>NUCLEOTIDE SEQUENCE [GENOMIC DNA]</scope>
    <scope>TISSUE SPECIFICITY</scope>
    <scope>DEVELOPMENTAL STAGE</scope>
</reference>
<dbReference type="EMBL" id="DQ335470">
    <property type="protein sequence ID" value="ABC60024.1"/>
    <property type="molecule type" value="Genomic_DNA"/>
</dbReference>
<dbReference type="RefSeq" id="XP_005806419.1">
    <property type="nucleotide sequence ID" value="XM_005806362.2"/>
</dbReference>
<dbReference type="SMR" id="Q2I327"/>
<dbReference type="FunCoup" id="Q2I327">
    <property type="interactions" value="493"/>
</dbReference>
<dbReference type="STRING" id="8083.ENSXMAP00000003337"/>
<dbReference type="Ensembl" id="ENSXMAT00000003342.2">
    <property type="protein sequence ID" value="ENSXMAP00000003337.1"/>
    <property type="gene ID" value="ENSXMAG00000003327.2"/>
</dbReference>
<dbReference type="GeneID" id="102221849"/>
<dbReference type="KEGG" id="xma:102221849"/>
<dbReference type="CTD" id="63950"/>
<dbReference type="eggNOG" id="KOG3815">
    <property type="taxonomic scope" value="Eukaryota"/>
</dbReference>
<dbReference type="GeneTree" id="ENSGT00940000161649"/>
<dbReference type="HOGENOM" id="CLU_038477_1_0_1"/>
<dbReference type="InParanoid" id="Q2I327"/>
<dbReference type="OMA" id="LHKEQSY"/>
<dbReference type="OrthoDB" id="9942608at2759"/>
<dbReference type="Proteomes" id="UP000002852">
    <property type="component" value="Unassembled WGS sequence"/>
</dbReference>
<dbReference type="GO" id="GO:0005634">
    <property type="term" value="C:nucleus"/>
    <property type="evidence" value="ECO:0007669"/>
    <property type="project" value="UniProtKB-SubCell"/>
</dbReference>
<dbReference type="GO" id="GO:0000981">
    <property type="term" value="F:DNA-binding transcription factor activity, RNA polymerase II-specific"/>
    <property type="evidence" value="ECO:0007669"/>
    <property type="project" value="TreeGrafter"/>
</dbReference>
<dbReference type="GO" id="GO:0046872">
    <property type="term" value="F:metal ion binding"/>
    <property type="evidence" value="ECO:0007669"/>
    <property type="project" value="UniProtKB-KW"/>
</dbReference>
<dbReference type="GO" id="GO:0000978">
    <property type="term" value="F:RNA polymerase II cis-regulatory region sequence-specific DNA binding"/>
    <property type="evidence" value="ECO:0007669"/>
    <property type="project" value="TreeGrafter"/>
</dbReference>
<dbReference type="GO" id="GO:0007281">
    <property type="term" value="P:germ cell development"/>
    <property type="evidence" value="ECO:0007669"/>
    <property type="project" value="TreeGrafter"/>
</dbReference>
<dbReference type="GO" id="GO:0007548">
    <property type="term" value="P:sex differentiation"/>
    <property type="evidence" value="ECO:0007669"/>
    <property type="project" value="TreeGrafter"/>
</dbReference>
<dbReference type="FunFam" id="4.10.1040.10:FF:000001">
    <property type="entry name" value="doublesex- and mab-3-related transcription factor 1"/>
    <property type="match status" value="1"/>
</dbReference>
<dbReference type="Gene3D" id="4.10.1040.10">
    <property type="entry name" value="DM DNA-binding domain"/>
    <property type="match status" value="1"/>
</dbReference>
<dbReference type="Gene3D" id="1.10.8.10">
    <property type="entry name" value="DNA helicase RuvA subunit, C-terminal domain"/>
    <property type="match status" value="1"/>
</dbReference>
<dbReference type="InterPro" id="IPR001275">
    <property type="entry name" value="DM_DNA-bd"/>
</dbReference>
<dbReference type="InterPro" id="IPR036407">
    <property type="entry name" value="DM_DNA-bd_sf"/>
</dbReference>
<dbReference type="InterPro" id="IPR005173">
    <property type="entry name" value="DMA"/>
</dbReference>
<dbReference type="InterPro" id="IPR026607">
    <property type="entry name" value="DMRT"/>
</dbReference>
<dbReference type="InterPro" id="IPR046472">
    <property type="entry name" value="DMRT5_1_DMB_dom"/>
</dbReference>
<dbReference type="InterPro" id="IPR009060">
    <property type="entry name" value="UBA-like_sf"/>
</dbReference>
<dbReference type="PANTHER" id="PTHR12322">
    <property type="entry name" value="DOUBLESEX AND MAB-3 RELATED TRANSCRIPTION FACTOR DMRT"/>
    <property type="match status" value="1"/>
</dbReference>
<dbReference type="PANTHER" id="PTHR12322:SF76">
    <property type="entry name" value="DOUBLESEX- AND MAB-3-RELATED TRANSCRIPTION FACTOR A2"/>
    <property type="match status" value="1"/>
</dbReference>
<dbReference type="Pfam" id="PF00751">
    <property type="entry name" value="DM"/>
    <property type="match status" value="1"/>
</dbReference>
<dbReference type="Pfam" id="PF03474">
    <property type="entry name" value="DMA"/>
    <property type="match status" value="1"/>
</dbReference>
<dbReference type="Pfam" id="PF20624">
    <property type="entry name" value="DMRT5_DMB"/>
    <property type="match status" value="1"/>
</dbReference>
<dbReference type="SMART" id="SM00301">
    <property type="entry name" value="DM"/>
    <property type="match status" value="1"/>
</dbReference>
<dbReference type="SUPFAM" id="SSF82927">
    <property type="entry name" value="Cysteine-rich DNA binding domain, (DM domain)"/>
    <property type="match status" value="1"/>
</dbReference>
<dbReference type="SUPFAM" id="SSF46934">
    <property type="entry name" value="UBA-like"/>
    <property type="match status" value="1"/>
</dbReference>
<dbReference type="PROSITE" id="PS40000">
    <property type="entry name" value="DM_1"/>
    <property type="match status" value="1"/>
</dbReference>
<dbReference type="PROSITE" id="PS50809">
    <property type="entry name" value="DM_2"/>
    <property type="match status" value="1"/>
</dbReference>
<comment type="function">
    <text>May be involved in sexual development.</text>
</comment>
<comment type="subcellular location">
    <subcellularLocation>
        <location evidence="2">Nucleus</location>
    </subcellularLocation>
</comment>
<comment type="tissue specificity">
    <text evidence="4">Expressed in brain and eye.</text>
</comment>
<comment type="developmental stage">
    <text evidence="4">From 3 dpc, expressed in the olfactory placode, forebrain, midbrain, and lenses. At later stages, expression in the lenses is no longer detectable but is found in the fore- and ventral mid-brain and in the mid-hind-brain boundary. At 5 dpc, expressed in olfactory epithelium and brain.</text>
</comment>
<comment type="similarity">
    <text evidence="5">Belongs to the DMRT family.</text>
</comment>